<evidence type="ECO:0000255" key="1">
    <source>
        <dbReference type="HAMAP-Rule" id="MF_00016"/>
    </source>
</evidence>
<protein>
    <recommendedName>
        <fullName evidence="1">Holliday junction branch migration complex subunit RuvB</fullName>
        <ecNumber evidence="1">3.6.4.-</ecNumber>
    </recommendedName>
</protein>
<organism>
    <name type="scientific">Escherichia coli O6:H1 (strain CFT073 / ATCC 700928 / UPEC)</name>
    <dbReference type="NCBI Taxonomy" id="199310"/>
    <lineage>
        <taxon>Bacteria</taxon>
        <taxon>Pseudomonadati</taxon>
        <taxon>Pseudomonadota</taxon>
        <taxon>Gammaproteobacteria</taxon>
        <taxon>Enterobacterales</taxon>
        <taxon>Enterobacteriaceae</taxon>
        <taxon>Escherichia</taxon>
    </lineage>
</organism>
<gene>
    <name evidence="1" type="primary">ruvB</name>
    <name type="ordered locus">c2274</name>
</gene>
<accession>Q8FGR3</accession>
<sequence length="336" mass="37172">MIEADRLISAGTTLPEDVADRAIRPKLLEEYVGQPQVRSQMEIFIKAAKLRGDALDHLLIFGPPGLGKTTLANIVANEMGVNLRTTSGPVLEKAGDLAAMLTNLEPHDVLFIDEIHRLSPVVEEVLYPAMEDYQLDIMIGEGPAARSIKIDLPPFTLIGATTRAGSLTSPLRDRFGIVQRLEFYQVPDLQYIVSRSARFMGLEMSDDGALEVARRARGTPRIANRLLRRVRDFAEVKHDGTISADIAAQALDMLNVDAEGFDYMDRKLLLAVIDKFFGGPVGLDNLAAAIGEERETIEDVLEPYLIQQGFLQRTPRGRMATVRAWNHFGITPPEMP</sequence>
<comment type="function">
    <text evidence="1">The RuvA-RuvB-RuvC complex processes Holliday junction (HJ) DNA during genetic recombination and DNA repair, while the RuvA-RuvB complex plays an important role in the rescue of blocked DNA replication forks via replication fork reversal (RFR). RuvA specifically binds to HJ cruciform DNA, conferring on it an open structure. The RuvB hexamer acts as an ATP-dependent pump, pulling dsDNA into and through the RuvAB complex. RuvB forms 2 homohexamers on either side of HJ DNA bound by 1 or 2 RuvA tetramers; 4 subunits per hexamer contact DNA at a time. Coordinated motions by a converter formed by DNA-disengaged RuvB subunits stimulates ATP hydrolysis and nucleotide exchange. Immobilization of the converter enables RuvB to convert the ATP-contained energy into a lever motion, pulling 2 nucleotides of DNA out of the RuvA tetramer per ATP hydrolyzed, thus driving DNA branch migration. The RuvB motors rotate together with the DNA substrate, which together with the progressing nucleotide cycle form the mechanistic basis for DNA recombination by continuous HJ branch migration. Branch migration allows RuvC to scan DNA until it finds its consensus sequence, where it cleaves and resolves cruciform DNA.</text>
</comment>
<comment type="catalytic activity">
    <reaction evidence="1">
        <text>ATP + H2O = ADP + phosphate + H(+)</text>
        <dbReference type="Rhea" id="RHEA:13065"/>
        <dbReference type="ChEBI" id="CHEBI:15377"/>
        <dbReference type="ChEBI" id="CHEBI:15378"/>
        <dbReference type="ChEBI" id="CHEBI:30616"/>
        <dbReference type="ChEBI" id="CHEBI:43474"/>
        <dbReference type="ChEBI" id="CHEBI:456216"/>
    </reaction>
</comment>
<comment type="subunit">
    <text evidence="1">Homohexamer. Forms an RuvA(8)-RuvB(12)-Holliday junction (HJ) complex. HJ DNA is sandwiched between 2 RuvA tetramers; dsDNA enters through RuvA and exits via RuvB. An RuvB hexamer assembles on each DNA strand where it exits the tetramer. Each RuvB hexamer is contacted by two RuvA subunits (via domain III) on 2 adjacent RuvB subunits; this complex drives branch migration. In the full resolvosome a probable DNA-RuvA(4)-RuvB(12)-RuvC(2) complex forms which resolves the HJ.</text>
</comment>
<comment type="subcellular location">
    <subcellularLocation>
        <location evidence="1">Cytoplasm</location>
    </subcellularLocation>
</comment>
<comment type="domain">
    <text evidence="1">Has 3 domains, the large (RuvB-L) and small ATPase (RuvB-S) domains and the C-terminal head (RuvB-H) domain. The head domain binds DNA, while the ATPase domains jointly bind ATP, ADP or are empty depending on the state of the subunit in the translocation cycle. During a single DNA translocation step the structure of each domain remains the same, but their relative positions change.</text>
</comment>
<comment type="similarity">
    <text evidence="1">Belongs to the RuvB family.</text>
</comment>
<reference key="1">
    <citation type="journal article" date="2002" name="Proc. Natl. Acad. Sci. U.S.A.">
        <title>Extensive mosaic structure revealed by the complete genome sequence of uropathogenic Escherichia coli.</title>
        <authorList>
            <person name="Welch R.A."/>
            <person name="Burland V."/>
            <person name="Plunkett G. III"/>
            <person name="Redford P."/>
            <person name="Roesch P."/>
            <person name="Rasko D."/>
            <person name="Buckles E.L."/>
            <person name="Liou S.-R."/>
            <person name="Boutin A."/>
            <person name="Hackett J."/>
            <person name="Stroud D."/>
            <person name="Mayhew G.F."/>
            <person name="Rose D.J."/>
            <person name="Zhou S."/>
            <person name="Schwartz D.C."/>
            <person name="Perna N.T."/>
            <person name="Mobley H.L.T."/>
            <person name="Donnenberg M.S."/>
            <person name="Blattner F.R."/>
        </authorList>
    </citation>
    <scope>NUCLEOTIDE SEQUENCE [LARGE SCALE GENOMIC DNA]</scope>
    <source>
        <strain>CFT073 / ATCC 700928 / UPEC</strain>
    </source>
</reference>
<name>RUVB_ECOL6</name>
<feature type="chain" id="PRO_0000165529" description="Holliday junction branch migration complex subunit RuvB">
    <location>
        <begin position="1"/>
        <end position="336"/>
    </location>
</feature>
<feature type="region of interest" description="Large ATPase domain (RuvB-L)" evidence="1">
    <location>
        <begin position="4"/>
        <end position="184"/>
    </location>
</feature>
<feature type="region of interest" description="Small ATPAse domain (RuvB-S)" evidence="1">
    <location>
        <begin position="185"/>
        <end position="255"/>
    </location>
</feature>
<feature type="region of interest" description="Head domain (RuvB-H)" evidence="1">
    <location>
        <begin position="258"/>
        <end position="336"/>
    </location>
</feature>
<feature type="binding site" evidence="1">
    <location>
        <position position="23"/>
    </location>
    <ligand>
        <name>ATP</name>
        <dbReference type="ChEBI" id="CHEBI:30616"/>
    </ligand>
</feature>
<feature type="binding site" evidence="1">
    <location>
        <position position="24"/>
    </location>
    <ligand>
        <name>ATP</name>
        <dbReference type="ChEBI" id="CHEBI:30616"/>
    </ligand>
</feature>
<feature type="binding site" evidence="1">
    <location>
        <position position="65"/>
    </location>
    <ligand>
        <name>ATP</name>
        <dbReference type="ChEBI" id="CHEBI:30616"/>
    </ligand>
</feature>
<feature type="binding site" evidence="1">
    <location>
        <position position="68"/>
    </location>
    <ligand>
        <name>ATP</name>
        <dbReference type="ChEBI" id="CHEBI:30616"/>
    </ligand>
</feature>
<feature type="binding site" evidence="1">
    <location>
        <position position="69"/>
    </location>
    <ligand>
        <name>ATP</name>
        <dbReference type="ChEBI" id="CHEBI:30616"/>
    </ligand>
</feature>
<feature type="binding site" evidence="1">
    <location>
        <position position="69"/>
    </location>
    <ligand>
        <name>Mg(2+)</name>
        <dbReference type="ChEBI" id="CHEBI:18420"/>
    </ligand>
</feature>
<feature type="binding site" evidence="1">
    <location>
        <position position="70"/>
    </location>
    <ligand>
        <name>ATP</name>
        <dbReference type="ChEBI" id="CHEBI:30616"/>
    </ligand>
</feature>
<feature type="binding site" evidence="1">
    <location>
        <begin position="131"/>
        <end position="133"/>
    </location>
    <ligand>
        <name>ATP</name>
        <dbReference type="ChEBI" id="CHEBI:30616"/>
    </ligand>
</feature>
<feature type="binding site" evidence="1">
    <location>
        <position position="174"/>
    </location>
    <ligand>
        <name>ATP</name>
        <dbReference type="ChEBI" id="CHEBI:30616"/>
    </ligand>
</feature>
<feature type="binding site" evidence="1">
    <location>
        <position position="184"/>
    </location>
    <ligand>
        <name>ATP</name>
        <dbReference type="ChEBI" id="CHEBI:30616"/>
    </ligand>
</feature>
<feature type="binding site" evidence="1">
    <location>
        <position position="221"/>
    </location>
    <ligand>
        <name>ATP</name>
        <dbReference type="ChEBI" id="CHEBI:30616"/>
    </ligand>
</feature>
<feature type="binding site" evidence="1">
    <location>
        <position position="294"/>
    </location>
    <ligand>
        <name>DNA</name>
        <dbReference type="ChEBI" id="CHEBI:16991"/>
    </ligand>
</feature>
<feature type="binding site" evidence="1">
    <location>
        <position position="313"/>
    </location>
    <ligand>
        <name>DNA</name>
        <dbReference type="ChEBI" id="CHEBI:16991"/>
    </ligand>
</feature>
<feature type="binding site" evidence="1">
    <location>
        <position position="318"/>
    </location>
    <ligand>
        <name>DNA</name>
        <dbReference type="ChEBI" id="CHEBI:16991"/>
    </ligand>
</feature>
<dbReference type="EC" id="3.6.4.-" evidence="1"/>
<dbReference type="EMBL" id="AE014075">
    <property type="protein sequence ID" value="AAN80731.1"/>
    <property type="molecule type" value="Genomic_DNA"/>
</dbReference>
<dbReference type="RefSeq" id="WP_000568522.1">
    <property type="nucleotide sequence ID" value="NZ_CP051263.1"/>
</dbReference>
<dbReference type="SMR" id="Q8FGR3"/>
<dbReference type="STRING" id="199310.c2274"/>
<dbReference type="GeneID" id="86860002"/>
<dbReference type="KEGG" id="ecc:c2274"/>
<dbReference type="eggNOG" id="COG2255">
    <property type="taxonomic scope" value="Bacteria"/>
</dbReference>
<dbReference type="HOGENOM" id="CLU_055599_1_0_6"/>
<dbReference type="BioCyc" id="ECOL199310:C2274-MONOMER"/>
<dbReference type="Proteomes" id="UP000001410">
    <property type="component" value="Chromosome"/>
</dbReference>
<dbReference type="GO" id="GO:0005737">
    <property type="term" value="C:cytoplasm"/>
    <property type="evidence" value="ECO:0007669"/>
    <property type="project" value="UniProtKB-SubCell"/>
</dbReference>
<dbReference type="GO" id="GO:0048476">
    <property type="term" value="C:Holliday junction resolvase complex"/>
    <property type="evidence" value="ECO:0007669"/>
    <property type="project" value="UniProtKB-UniRule"/>
</dbReference>
<dbReference type="GO" id="GO:0005524">
    <property type="term" value="F:ATP binding"/>
    <property type="evidence" value="ECO:0007669"/>
    <property type="project" value="UniProtKB-UniRule"/>
</dbReference>
<dbReference type="GO" id="GO:0016887">
    <property type="term" value="F:ATP hydrolysis activity"/>
    <property type="evidence" value="ECO:0007669"/>
    <property type="project" value="InterPro"/>
</dbReference>
<dbReference type="GO" id="GO:0000400">
    <property type="term" value="F:four-way junction DNA binding"/>
    <property type="evidence" value="ECO:0007669"/>
    <property type="project" value="UniProtKB-UniRule"/>
</dbReference>
<dbReference type="GO" id="GO:0009378">
    <property type="term" value="F:four-way junction helicase activity"/>
    <property type="evidence" value="ECO:0007669"/>
    <property type="project" value="InterPro"/>
</dbReference>
<dbReference type="GO" id="GO:0006310">
    <property type="term" value="P:DNA recombination"/>
    <property type="evidence" value="ECO:0007669"/>
    <property type="project" value="UniProtKB-UniRule"/>
</dbReference>
<dbReference type="GO" id="GO:0006281">
    <property type="term" value="P:DNA repair"/>
    <property type="evidence" value="ECO:0007669"/>
    <property type="project" value="UniProtKB-UniRule"/>
</dbReference>
<dbReference type="GO" id="GO:0009432">
    <property type="term" value="P:SOS response"/>
    <property type="evidence" value="ECO:0007669"/>
    <property type="project" value="UniProtKB-UniRule"/>
</dbReference>
<dbReference type="CDD" id="cd00009">
    <property type="entry name" value="AAA"/>
    <property type="match status" value="1"/>
</dbReference>
<dbReference type="FunFam" id="1.10.10.10:FF:000086">
    <property type="entry name" value="Holliday junction ATP-dependent DNA helicase RuvB"/>
    <property type="match status" value="1"/>
</dbReference>
<dbReference type="FunFam" id="1.10.8.60:FF:000023">
    <property type="entry name" value="Holliday junction ATP-dependent DNA helicase RuvB"/>
    <property type="match status" value="1"/>
</dbReference>
<dbReference type="FunFam" id="3.40.50.300:FF:000073">
    <property type="entry name" value="Holliday junction ATP-dependent DNA helicase RuvB"/>
    <property type="match status" value="1"/>
</dbReference>
<dbReference type="Gene3D" id="1.10.8.60">
    <property type="match status" value="1"/>
</dbReference>
<dbReference type="Gene3D" id="3.40.50.300">
    <property type="entry name" value="P-loop containing nucleotide triphosphate hydrolases"/>
    <property type="match status" value="1"/>
</dbReference>
<dbReference type="Gene3D" id="1.10.10.10">
    <property type="entry name" value="Winged helix-like DNA-binding domain superfamily/Winged helix DNA-binding domain"/>
    <property type="match status" value="1"/>
</dbReference>
<dbReference type="HAMAP" id="MF_00016">
    <property type="entry name" value="DNA_HJ_migration_RuvB"/>
    <property type="match status" value="1"/>
</dbReference>
<dbReference type="InterPro" id="IPR003593">
    <property type="entry name" value="AAA+_ATPase"/>
</dbReference>
<dbReference type="InterPro" id="IPR041445">
    <property type="entry name" value="AAA_lid_4"/>
</dbReference>
<dbReference type="InterPro" id="IPR004605">
    <property type="entry name" value="DNA_helicase_Holl-junc_RuvB"/>
</dbReference>
<dbReference type="InterPro" id="IPR027417">
    <property type="entry name" value="P-loop_NTPase"/>
</dbReference>
<dbReference type="InterPro" id="IPR008824">
    <property type="entry name" value="RuvB-like_N"/>
</dbReference>
<dbReference type="InterPro" id="IPR008823">
    <property type="entry name" value="RuvB_C"/>
</dbReference>
<dbReference type="InterPro" id="IPR036388">
    <property type="entry name" value="WH-like_DNA-bd_sf"/>
</dbReference>
<dbReference type="InterPro" id="IPR036390">
    <property type="entry name" value="WH_DNA-bd_sf"/>
</dbReference>
<dbReference type="NCBIfam" id="NF000868">
    <property type="entry name" value="PRK00080.1"/>
    <property type="match status" value="1"/>
</dbReference>
<dbReference type="NCBIfam" id="TIGR00635">
    <property type="entry name" value="ruvB"/>
    <property type="match status" value="1"/>
</dbReference>
<dbReference type="PANTHER" id="PTHR42848">
    <property type="match status" value="1"/>
</dbReference>
<dbReference type="PANTHER" id="PTHR42848:SF1">
    <property type="entry name" value="HOLLIDAY JUNCTION BRANCH MIGRATION COMPLEX SUBUNIT RUVB"/>
    <property type="match status" value="1"/>
</dbReference>
<dbReference type="Pfam" id="PF17864">
    <property type="entry name" value="AAA_lid_4"/>
    <property type="match status" value="1"/>
</dbReference>
<dbReference type="Pfam" id="PF05491">
    <property type="entry name" value="RuvB_C"/>
    <property type="match status" value="1"/>
</dbReference>
<dbReference type="Pfam" id="PF05496">
    <property type="entry name" value="RuvB_N"/>
    <property type="match status" value="1"/>
</dbReference>
<dbReference type="SMART" id="SM00382">
    <property type="entry name" value="AAA"/>
    <property type="match status" value="1"/>
</dbReference>
<dbReference type="SUPFAM" id="SSF52540">
    <property type="entry name" value="P-loop containing nucleoside triphosphate hydrolases"/>
    <property type="match status" value="1"/>
</dbReference>
<dbReference type="SUPFAM" id="SSF46785">
    <property type="entry name" value="Winged helix' DNA-binding domain"/>
    <property type="match status" value="1"/>
</dbReference>
<keyword id="KW-0067">ATP-binding</keyword>
<keyword id="KW-0963">Cytoplasm</keyword>
<keyword id="KW-0227">DNA damage</keyword>
<keyword id="KW-0233">DNA recombination</keyword>
<keyword id="KW-0234">DNA repair</keyword>
<keyword id="KW-0238">DNA-binding</keyword>
<keyword id="KW-0378">Hydrolase</keyword>
<keyword id="KW-0547">Nucleotide-binding</keyword>
<keyword id="KW-1185">Reference proteome</keyword>
<keyword id="KW-0742">SOS response</keyword>
<proteinExistence type="inferred from homology"/>